<keyword id="KW-0012">Acyltransferase</keyword>
<keyword id="KW-0028">Amino-acid biosynthesis</keyword>
<keyword id="KW-0963">Cytoplasm</keyword>
<keyword id="KW-0486">Methionine biosynthesis</keyword>
<keyword id="KW-1185">Reference proteome</keyword>
<keyword id="KW-0808">Transferase</keyword>
<dbReference type="EC" id="2.3.1.31" evidence="1"/>
<dbReference type="EMBL" id="BA000043">
    <property type="protein sequence ID" value="BAD76072.1"/>
    <property type="molecule type" value="Genomic_DNA"/>
</dbReference>
<dbReference type="SMR" id="Q5KZ14"/>
<dbReference type="STRING" id="235909.GK1787"/>
<dbReference type="KEGG" id="gka:GK1787"/>
<dbReference type="eggNOG" id="COG1897">
    <property type="taxonomic scope" value="Bacteria"/>
</dbReference>
<dbReference type="HOGENOM" id="CLU_057851_0_1_9"/>
<dbReference type="UniPathway" id="UPA00051">
    <property type="reaction ID" value="UER00074"/>
</dbReference>
<dbReference type="Proteomes" id="UP000001172">
    <property type="component" value="Chromosome"/>
</dbReference>
<dbReference type="GO" id="GO:0005737">
    <property type="term" value="C:cytoplasm"/>
    <property type="evidence" value="ECO:0007669"/>
    <property type="project" value="UniProtKB-SubCell"/>
</dbReference>
<dbReference type="GO" id="GO:0004414">
    <property type="term" value="F:homoserine O-acetyltransferase activity"/>
    <property type="evidence" value="ECO:0007669"/>
    <property type="project" value="UniProtKB-EC"/>
</dbReference>
<dbReference type="GO" id="GO:0008899">
    <property type="term" value="F:homoserine O-succinyltransferase activity"/>
    <property type="evidence" value="ECO:0007669"/>
    <property type="project" value="UniProtKB-UniRule"/>
</dbReference>
<dbReference type="GO" id="GO:0019281">
    <property type="term" value="P:L-methionine biosynthetic process from homoserine via O-succinyl-L-homoserine and cystathionine"/>
    <property type="evidence" value="ECO:0007669"/>
    <property type="project" value="InterPro"/>
</dbReference>
<dbReference type="CDD" id="cd03131">
    <property type="entry name" value="GATase1_HTS"/>
    <property type="match status" value="1"/>
</dbReference>
<dbReference type="FunFam" id="3.40.50.880:FF:000004">
    <property type="entry name" value="Homoserine O-succinyltransferase"/>
    <property type="match status" value="1"/>
</dbReference>
<dbReference type="Gene3D" id="3.40.50.880">
    <property type="match status" value="1"/>
</dbReference>
<dbReference type="HAMAP" id="MF_00295">
    <property type="entry name" value="MetA_acyltransf"/>
    <property type="match status" value="1"/>
</dbReference>
<dbReference type="InterPro" id="IPR029062">
    <property type="entry name" value="Class_I_gatase-like"/>
</dbReference>
<dbReference type="InterPro" id="IPR005697">
    <property type="entry name" value="HST_MetA"/>
</dbReference>
<dbReference type="InterPro" id="IPR033752">
    <property type="entry name" value="MetA_family"/>
</dbReference>
<dbReference type="NCBIfam" id="TIGR01001">
    <property type="entry name" value="metA"/>
    <property type="match status" value="1"/>
</dbReference>
<dbReference type="PANTHER" id="PTHR20919">
    <property type="entry name" value="HOMOSERINE O-SUCCINYLTRANSFERASE"/>
    <property type="match status" value="1"/>
</dbReference>
<dbReference type="PANTHER" id="PTHR20919:SF0">
    <property type="entry name" value="HOMOSERINE O-SUCCINYLTRANSFERASE"/>
    <property type="match status" value="1"/>
</dbReference>
<dbReference type="Pfam" id="PF04204">
    <property type="entry name" value="HTS"/>
    <property type="match status" value="1"/>
</dbReference>
<dbReference type="PIRSF" id="PIRSF000450">
    <property type="entry name" value="H_ser_succinyltr"/>
    <property type="match status" value="1"/>
</dbReference>
<dbReference type="SUPFAM" id="SSF52317">
    <property type="entry name" value="Class I glutamine amidotransferase-like"/>
    <property type="match status" value="1"/>
</dbReference>
<organism>
    <name type="scientific">Geobacillus kaustophilus (strain HTA426)</name>
    <dbReference type="NCBI Taxonomy" id="235909"/>
    <lineage>
        <taxon>Bacteria</taxon>
        <taxon>Bacillati</taxon>
        <taxon>Bacillota</taxon>
        <taxon>Bacilli</taxon>
        <taxon>Bacillales</taxon>
        <taxon>Anoxybacillaceae</taxon>
        <taxon>Geobacillus</taxon>
        <taxon>Geobacillus thermoleovorans group</taxon>
    </lineage>
</organism>
<gene>
    <name evidence="1" type="primary">metAA</name>
    <name type="ordered locus">GK1787</name>
</gene>
<accession>Q5KZ14</accession>
<sequence>MPINIPKDLPAKEILEQENIFVMDEERAYSQDIRPLNIIILNLMPEKEKAETQLLRLLGNSPLQVNVTFLRPATHEPKTTSKHHLEQFYTIFPHIRHRKFDGMIITGAPVEQMPFEEVNYWGELTEIMEWTKTNVTSTLHICWGAQAGLYYHYGIPKYPLPEKCFGVFNHTVEVKNVKLLRGFDDVFRMPHSRHTDVKREDIEKVPDLTILSMSDKAGVCLVASNDGRRIFLTGHPEYDATTLKEEYERDLAKGLPIHIPESYFPNDDPSQPPLNTWRSHANLLFVNWLNYYVYQETPYEWE</sequence>
<reference key="1">
    <citation type="journal article" date="2004" name="Nucleic Acids Res.">
        <title>Thermoadaptation trait revealed by the genome sequence of thermophilic Geobacillus kaustophilus.</title>
        <authorList>
            <person name="Takami H."/>
            <person name="Takaki Y."/>
            <person name="Chee G.-J."/>
            <person name="Nishi S."/>
            <person name="Shimamura S."/>
            <person name="Suzuki H."/>
            <person name="Matsui S."/>
            <person name="Uchiyama I."/>
        </authorList>
    </citation>
    <scope>NUCLEOTIDE SEQUENCE [LARGE SCALE GENOMIC DNA]</scope>
    <source>
        <strain>HTA426</strain>
    </source>
</reference>
<evidence type="ECO:0000255" key="1">
    <source>
        <dbReference type="HAMAP-Rule" id="MF_00295"/>
    </source>
</evidence>
<name>METAA_GEOKA</name>
<proteinExistence type="inferred from homology"/>
<comment type="function">
    <text evidence="1">Transfers an acetyl group from acetyl-CoA to L-homoserine, forming acetyl-L-homoserine.</text>
</comment>
<comment type="catalytic activity">
    <reaction evidence="1">
        <text>L-homoserine + acetyl-CoA = O-acetyl-L-homoserine + CoA</text>
        <dbReference type="Rhea" id="RHEA:13701"/>
        <dbReference type="ChEBI" id="CHEBI:57287"/>
        <dbReference type="ChEBI" id="CHEBI:57288"/>
        <dbReference type="ChEBI" id="CHEBI:57476"/>
        <dbReference type="ChEBI" id="CHEBI:57716"/>
        <dbReference type="EC" id="2.3.1.31"/>
    </reaction>
</comment>
<comment type="pathway">
    <text evidence="1">Amino-acid biosynthesis; L-methionine biosynthesis via de novo pathway; O-acetyl-L-homoserine from L-homoserine: step 1/1.</text>
</comment>
<comment type="subcellular location">
    <subcellularLocation>
        <location evidence="1">Cytoplasm</location>
    </subcellularLocation>
</comment>
<comment type="similarity">
    <text evidence="1">Belongs to the MetA family.</text>
</comment>
<feature type="chain" id="PRO_1000021815" description="Homoserine O-acetyltransferase">
    <location>
        <begin position="1"/>
        <end position="302"/>
    </location>
</feature>
<feature type="active site" description="Acyl-thioester intermediate" evidence="1">
    <location>
        <position position="142"/>
    </location>
</feature>
<feature type="active site" description="Proton acceptor" evidence="1">
    <location>
        <position position="235"/>
    </location>
</feature>
<feature type="active site" evidence="1">
    <location>
        <position position="237"/>
    </location>
</feature>
<feature type="binding site" evidence="1">
    <location>
        <position position="163"/>
    </location>
    <ligand>
        <name>substrate</name>
    </ligand>
</feature>
<feature type="binding site" evidence="1">
    <location>
        <position position="192"/>
    </location>
    <ligand>
        <name>substrate</name>
    </ligand>
</feature>
<feature type="binding site" evidence="1">
    <location>
        <position position="249"/>
    </location>
    <ligand>
        <name>substrate</name>
    </ligand>
</feature>
<feature type="site" description="Important for acyl-CoA specificity" evidence="1">
    <location>
        <position position="111"/>
    </location>
</feature>
<feature type="site" description="Important for substrate specificity" evidence="1">
    <location>
        <position position="192"/>
    </location>
</feature>
<protein>
    <recommendedName>
        <fullName evidence="1">Homoserine O-acetyltransferase</fullName>
        <shortName evidence="1">HAT</shortName>
        <ecNumber evidence="1">2.3.1.31</ecNumber>
    </recommendedName>
    <alternativeName>
        <fullName evidence="1">Homoserine transacetylase</fullName>
        <shortName evidence="1">HTA</shortName>
    </alternativeName>
</protein>